<keyword id="KW-0007">Acetylation</keyword>
<keyword id="KW-0687">Ribonucleoprotein</keyword>
<keyword id="KW-0689">Ribosomal protein</keyword>
<keyword id="KW-0694">RNA-binding</keyword>
<keyword id="KW-0699">rRNA-binding</keyword>
<reference key="1">
    <citation type="journal article" date="2009" name="PLoS Genet.">
        <title>Organised genome dynamics in the Escherichia coli species results in highly diverse adaptive paths.</title>
        <authorList>
            <person name="Touchon M."/>
            <person name="Hoede C."/>
            <person name="Tenaillon O."/>
            <person name="Barbe V."/>
            <person name="Baeriswyl S."/>
            <person name="Bidet P."/>
            <person name="Bingen E."/>
            <person name="Bonacorsi S."/>
            <person name="Bouchier C."/>
            <person name="Bouvet O."/>
            <person name="Calteau A."/>
            <person name="Chiapello H."/>
            <person name="Clermont O."/>
            <person name="Cruveiller S."/>
            <person name="Danchin A."/>
            <person name="Diard M."/>
            <person name="Dossat C."/>
            <person name="Karoui M.E."/>
            <person name="Frapy E."/>
            <person name="Garry L."/>
            <person name="Ghigo J.M."/>
            <person name="Gilles A.M."/>
            <person name="Johnson J."/>
            <person name="Le Bouguenec C."/>
            <person name="Lescat M."/>
            <person name="Mangenot S."/>
            <person name="Martinez-Jehanne V."/>
            <person name="Matic I."/>
            <person name="Nassif X."/>
            <person name="Oztas S."/>
            <person name="Petit M.A."/>
            <person name="Pichon C."/>
            <person name="Rouy Z."/>
            <person name="Ruf C.S."/>
            <person name="Schneider D."/>
            <person name="Tourret J."/>
            <person name="Vacherie B."/>
            <person name="Vallenet D."/>
            <person name="Medigue C."/>
            <person name="Rocha E.P.C."/>
            <person name="Denamur E."/>
        </authorList>
    </citation>
    <scope>NUCLEOTIDE SEQUENCE [LARGE SCALE GENOMIC DNA]</scope>
    <source>
        <strain>ATCC 35469 / DSM 13698 / BCRC 15582 / CCUG 18766 / IAM 14443 / JCM 21226 / LMG 7866 / NBRC 102419 / NCTC 12128 / CDC 0568-73</strain>
    </source>
</reference>
<feature type="chain" id="PRO_1000143990" description="Large ribosomal subunit protein uL6">
    <location>
        <begin position="1"/>
        <end position="177"/>
    </location>
</feature>
<feature type="modified residue" description="N6-acetyllysine" evidence="1">
    <location>
        <position position="44"/>
    </location>
</feature>
<proteinExistence type="inferred from homology"/>
<protein>
    <recommendedName>
        <fullName evidence="1">Large ribosomal subunit protein uL6</fullName>
    </recommendedName>
    <alternativeName>
        <fullName evidence="2">50S ribosomal protein L6</fullName>
    </alternativeName>
</protein>
<sequence>MSRVAKAPVVVPAGVDVKINGQVITIKGKNGELTRTLNDAVEVKHADNTLTFGPRDGYADGWAQAGTARALLNSMVIGVTEGFTKKLQLVGVGYRAAVKGNVVNLSLGFSHPVDHQLPAGITAECPTQTEIVLKGADKQVIGQVAADLRAYRRPEPYKGKGVRYADEVVRTKEAKKK</sequence>
<organism>
    <name type="scientific">Escherichia fergusonii (strain ATCC 35469 / DSM 13698 / CCUG 18766 / IAM 14443 / JCM 21226 / LMG 7866 / NBRC 102419 / NCTC 12128 / CDC 0568-73)</name>
    <dbReference type="NCBI Taxonomy" id="585054"/>
    <lineage>
        <taxon>Bacteria</taxon>
        <taxon>Pseudomonadati</taxon>
        <taxon>Pseudomonadota</taxon>
        <taxon>Gammaproteobacteria</taxon>
        <taxon>Enterobacterales</taxon>
        <taxon>Enterobacteriaceae</taxon>
        <taxon>Escherichia</taxon>
    </lineage>
</organism>
<name>RL6_ESCF3</name>
<accession>B7LRS1</accession>
<evidence type="ECO:0000255" key="1">
    <source>
        <dbReference type="HAMAP-Rule" id="MF_01365"/>
    </source>
</evidence>
<evidence type="ECO:0000305" key="2"/>
<dbReference type="EMBL" id="CU928158">
    <property type="protein sequence ID" value="CAQ90768.1"/>
    <property type="molecule type" value="Genomic_DNA"/>
</dbReference>
<dbReference type="RefSeq" id="WP_000091947.1">
    <property type="nucleotide sequence ID" value="NC_011740.1"/>
</dbReference>
<dbReference type="SMR" id="B7LRS1"/>
<dbReference type="GeneID" id="75060101"/>
<dbReference type="KEGG" id="efe:EFER_3288"/>
<dbReference type="HOGENOM" id="CLU_065464_1_2_6"/>
<dbReference type="OrthoDB" id="9805007at2"/>
<dbReference type="Proteomes" id="UP000000745">
    <property type="component" value="Chromosome"/>
</dbReference>
<dbReference type="GO" id="GO:0022625">
    <property type="term" value="C:cytosolic large ribosomal subunit"/>
    <property type="evidence" value="ECO:0007669"/>
    <property type="project" value="TreeGrafter"/>
</dbReference>
<dbReference type="GO" id="GO:0019843">
    <property type="term" value="F:rRNA binding"/>
    <property type="evidence" value="ECO:0007669"/>
    <property type="project" value="UniProtKB-UniRule"/>
</dbReference>
<dbReference type="GO" id="GO:0003735">
    <property type="term" value="F:structural constituent of ribosome"/>
    <property type="evidence" value="ECO:0007669"/>
    <property type="project" value="InterPro"/>
</dbReference>
<dbReference type="GO" id="GO:0002181">
    <property type="term" value="P:cytoplasmic translation"/>
    <property type="evidence" value="ECO:0007669"/>
    <property type="project" value="TreeGrafter"/>
</dbReference>
<dbReference type="FunFam" id="3.90.930.12:FF:000001">
    <property type="entry name" value="50S ribosomal protein L6"/>
    <property type="match status" value="1"/>
</dbReference>
<dbReference type="FunFam" id="3.90.930.12:FF:000002">
    <property type="entry name" value="50S ribosomal protein L6"/>
    <property type="match status" value="1"/>
</dbReference>
<dbReference type="Gene3D" id="3.90.930.12">
    <property type="entry name" value="Ribosomal protein L6, alpha-beta domain"/>
    <property type="match status" value="2"/>
</dbReference>
<dbReference type="HAMAP" id="MF_01365_B">
    <property type="entry name" value="Ribosomal_uL6_B"/>
    <property type="match status" value="1"/>
</dbReference>
<dbReference type="InterPro" id="IPR000702">
    <property type="entry name" value="Ribosomal_uL6-like"/>
</dbReference>
<dbReference type="InterPro" id="IPR036789">
    <property type="entry name" value="Ribosomal_uL6-like_a/b-dom_sf"/>
</dbReference>
<dbReference type="InterPro" id="IPR020040">
    <property type="entry name" value="Ribosomal_uL6_a/b-dom"/>
</dbReference>
<dbReference type="InterPro" id="IPR019906">
    <property type="entry name" value="Ribosomal_uL6_bac-type"/>
</dbReference>
<dbReference type="InterPro" id="IPR002358">
    <property type="entry name" value="Ribosomal_uL6_CS"/>
</dbReference>
<dbReference type="NCBIfam" id="TIGR03654">
    <property type="entry name" value="L6_bact"/>
    <property type="match status" value="1"/>
</dbReference>
<dbReference type="PANTHER" id="PTHR11655">
    <property type="entry name" value="60S/50S RIBOSOMAL PROTEIN L6/L9"/>
    <property type="match status" value="1"/>
</dbReference>
<dbReference type="PANTHER" id="PTHR11655:SF14">
    <property type="entry name" value="LARGE RIBOSOMAL SUBUNIT PROTEIN UL6M"/>
    <property type="match status" value="1"/>
</dbReference>
<dbReference type="Pfam" id="PF00347">
    <property type="entry name" value="Ribosomal_L6"/>
    <property type="match status" value="2"/>
</dbReference>
<dbReference type="PIRSF" id="PIRSF002162">
    <property type="entry name" value="Ribosomal_L6"/>
    <property type="match status" value="1"/>
</dbReference>
<dbReference type="PRINTS" id="PR00059">
    <property type="entry name" value="RIBOSOMALL6"/>
</dbReference>
<dbReference type="SUPFAM" id="SSF56053">
    <property type="entry name" value="Ribosomal protein L6"/>
    <property type="match status" value="2"/>
</dbReference>
<dbReference type="PROSITE" id="PS00525">
    <property type="entry name" value="RIBOSOMAL_L6_1"/>
    <property type="match status" value="1"/>
</dbReference>
<comment type="function">
    <text evidence="1">This protein binds to the 23S rRNA, and is important in its secondary structure. It is located near the subunit interface in the base of the L7/L12 stalk, and near the tRNA binding site of the peptidyltransferase center.</text>
</comment>
<comment type="subunit">
    <text evidence="1">Part of the 50S ribosomal subunit.</text>
</comment>
<comment type="similarity">
    <text evidence="1">Belongs to the universal ribosomal protein uL6 family.</text>
</comment>
<gene>
    <name evidence="1" type="primary">rplF</name>
    <name type="ordered locus">EFER_3288</name>
</gene>